<evidence type="ECO:0000255" key="1">
    <source>
        <dbReference type="HAMAP-Rule" id="MF_00323"/>
    </source>
</evidence>
<evidence type="ECO:0000305" key="2"/>
<comment type="function">
    <text evidence="1">Catalyzes the ferrous insertion into protoporphyrin IX.</text>
</comment>
<comment type="catalytic activity">
    <reaction evidence="1">
        <text>heme b + 2 H(+) = protoporphyrin IX + Fe(2+)</text>
        <dbReference type="Rhea" id="RHEA:22584"/>
        <dbReference type="ChEBI" id="CHEBI:15378"/>
        <dbReference type="ChEBI" id="CHEBI:29033"/>
        <dbReference type="ChEBI" id="CHEBI:57306"/>
        <dbReference type="ChEBI" id="CHEBI:60344"/>
        <dbReference type="EC" id="4.98.1.1"/>
    </reaction>
</comment>
<comment type="pathway">
    <text evidence="1">Porphyrin-containing compound metabolism; protoheme biosynthesis; protoheme from protoporphyrin-IX: step 1/1.</text>
</comment>
<comment type="subcellular location">
    <subcellularLocation>
        <location evidence="1">Cytoplasm</location>
    </subcellularLocation>
</comment>
<comment type="similarity">
    <text evidence="1">Belongs to the ferrochelatase family.</text>
</comment>
<comment type="sequence caution" evidence="2">
    <conflict type="erroneous initiation">
        <sequence resource="EMBL-CDS" id="AAU04327"/>
    </conflict>
</comment>
<protein>
    <recommendedName>
        <fullName evidence="1">Ferrochelatase</fullName>
        <ecNumber evidence="1">4.98.1.1</ecNumber>
    </recommendedName>
    <alternativeName>
        <fullName evidence="1">Heme synthase</fullName>
    </alternativeName>
    <alternativeName>
        <fullName evidence="1">Protoheme ferro-lyase</fullName>
    </alternativeName>
</protein>
<sequence>MKKRIAIVLFNLGGPEDIEYVKPFLFNLFYDKAIINLPNPLRYVIAKIISIVRERKSQKIYSLIGRKSYLIQETEKQKLAITKKLKEILKEDFIIFISMRYSTPFAKEVICQIKEYNPSEIILLPLYPQFSSTTTGSSVKNFLQNIDIDIPIKTICCYPIEEDFIKAHVSIIKEKLYDKNFRILFSAHGLPKRIIKAGDPYSFQIKETVNKIVKELNIKDLDYKITYQSRVGPIEWLKPSTEYEIELAGKLKKDIIIVPISFVSEHVETLVELDIEYKFIADKYNIQYTRIPTLGTNKIFINSLTNILIRFINKTDTNLVMSSSSKRICPNKFTKCLCNLIN</sequence>
<reference key="1">
    <citation type="journal article" date="2004" name="J. Bacteriol.">
        <title>Complete genome sequence of Rickettsia typhi and comparison with sequences of other Rickettsiae.</title>
        <authorList>
            <person name="McLeod M.P."/>
            <person name="Qin X."/>
            <person name="Karpathy S.E."/>
            <person name="Gioia J."/>
            <person name="Highlander S.K."/>
            <person name="Fox G.E."/>
            <person name="McNeill T.Z."/>
            <person name="Jiang H."/>
            <person name="Muzny D."/>
            <person name="Jacob L.S."/>
            <person name="Hawes A.C."/>
            <person name="Sodergren E."/>
            <person name="Gill R."/>
            <person name="Hume J."/>
            <person name="Morgan M."/>
            <person name="Fan G."/>
            <person name="Amin A.G."/>
            <person name="Gibbs R.A."/>
            <person name="Hong C."/>
            <person name="Yu X.-J."/>
            <person name="Walker D.H."/>
            <person name="Weinstock G.M."/>
        </authorList>
    </citation>
    <scope>NUCLEOTIDE SEQUENCE [LARGE SCALE GENOMIC DNA]</scope>
    <source>
        <strain>ATCC VR-144 / Wilmington</strain>
    </source>
</reference>
<accession>Q68VM9</accession>
<feature type="chain" id="PRO_0000175195" description="Ferrochelatase">
    <location>
        <begin position="1"/>
        <end position="342"/>
    </location>
</feature>
<feature type="binding site" evidence="1">
    <location>
        <position position="188"/>
    </location>
    <ligand>
        <name>Fe cation</name>
        <dbReference type="ChEBI" id="CHEBI:24875"/>
    </ligand>
</feature>
<feature type="binding site" evidence="1">
    <location>
        <position position="268"/>
    </location>
    <ligand>
        <name>Fe cation</name>
        <dbReference type="ChEBI" id="CHEBI:24875"/>
    </ligand>
</feature>
<keyword id="KW-0963">Cytoplasm</keyword>
<keyword id="KW-0350">Heme biosynthesis</keyword>
<keyword id="KW-0408">Iron</keyword>
<keyword id="KW-0456">Lyase</keyword>
<keyword id="KW-0479">Metal-binding</keyword>
<keyword id="KW-0627">Porphyrin biosynthesis</keyword>
<gene>
    <name evidence="1" type="primary">hemH</name>
    <name type="ordered locus">RT0876</name>
</gene>
<name>HEMH_RICTY</name>
<dbReference type="EC" id="4.98.1.1" evidence="1"/>
<dbReference type="EMBL" id="AE017197">
    <property type="protein sequence ID" value="AAU04327.1"/>
    <property type="status" value="ALT_INIT"/>
    <property type="molecule type" value="Genomic_DNA"/>
</dbReference>
<dbReference type="SMR" id="Q68VM9"/>
<dbReference type="KEGG" id="rty:RT0876"/>
<dbReference type="eggNOG" id="COG0276">
    <property type="taxonomic scope" value="Bacteria"/>
</dbReference>
<dbReference type="HOGENOM" id="CLU_018884_1_0_5"/>
<dbReference type="UniPathway" id="UPA00252">
    <property type="reaction ID" value="UER00325"/>
</dbReference>
<dbReference type="Proteomes" id="UP000000604">
    <property type="component" value="Chromosome"/>
</dbReference>
<dbReference type="GO" id="GO:0005737">
    <property type="term" value="C:cytoplasm"/>
    <property type="evidence" value="ECO:0007669"/>
    <property type="project" value="UniProtKB-SubCell"/>
</dbReference>
<dbReference type="GO" id="GO:0004325">
    <property type="term" value="F:ferrochelatase activity"/>
    <property type="evidence" value="ECO:0007669"/>
    <property type="project" value="UniProtKB-UniRule"/>
</dbReference>
<dbReference type="GO" id="GO:0046872">
    <property type="term" value="F:metal ion binding"/>
    <property type="evidence" value="ECO:0007669"/>
    <property type="project" value="UniProtKB-KW"/>
</dbReference>
<dbReference type="GO" id="GO:0006783">
    <property type="term" value="P:heme biosynthetic process"/>
    <property type="evidence" value="ECO:0007669"/>
    <property type="project" value="UniProtKB-UniRule"/>
</dbReference>
<dbReference type="CDD" id="cd00419">
    <property type="entry name" value="Ferrochelatase_C"/>
    <property type="match status" value="1"/>
</dbReference>
<dbReference type="CDD" id="cd03411">
    <property type="entry name" value="Ferrochelatase_N"/>
    <property type="match status" value="1"/>
</dbReference>
<dbReference type="Gene3D" id="3.40.50.1400">
    <property type="match status" value="2"/>
</dbReference>
<dbReference type="HAMAP" id="MF_00323">
    <property type="entry name" value="Ferrochelatase"/>
    <property type="match status" value="1"/>
</dbReference>
<dbReference type="InterPro" id="IPR001015">
    <property type="entry name" value="Ferrochelatase"/>
</dbReference>
<dbReference type="InterPro" id="IPR019772">
    <property type="entry name" value="Ferrochelatase_AS"/>
</dbReference>
<dbReference type="InterPro" id="IPR033644">
    <property type="entry name" value="Ferrochelatase_C"/>
</dbReference>
<dbReference type="InterPro" id="IPR033659">
    <property type="entry name" value="Ferrochelatase_N"/>
</dbReference>
<dbReference type="NCBIfam" id="TIGR00109">
    <property type="entry name" value="hemH"/>
    <property type="match status" value="1"/>
</dbReference>
<dbReference type="PANTHER" id="PTHR11108">
    <property type="entry name" value="FERROCHELATASE"/>
    <property type="match status" value="1"/>
</dbReference>
<dbReference type="PANTHER" id="PTHR11108:SF1">
    <property type="entry name" value="FERROCHELATASE, MITOCHONDRIAL"/>
    <property type="match status" value="1"/>
</dbReference>
<dbReference type="Pfam" id="PF00762">
    <property type="entry name" value="Ferrochelatase"/>
    <property type="match status" value="1"/>
</dbReference>
<dbReference type="SUPFAM" id="SSF53800">
    <property type="entry name" value="Chelatase"/>
    <property type="match status" value="1"/>
</dbReference>
<dbReference type="PROSITE" id="PS00534">
    <property type="entry name" value="FERROCHELATASE"/>
    <property type="match status" value="1"/>
</dbReference>
<organism>
    <name type="scientific">Rickettsia typhi (strain ATCC VR-144 / Wilmington)</name>
    <dbReference type="NCBI Taxonomy" id="257363"/>
    <lineage>
        <taxon>Bacteria</taxon>
        <taxon>Pseudomonadati</taxon>
        <taxon>Pseudomonadota</taxon>
        <taxon>Alphaproteobacteria</taxon>
        <taxon>Rickettsiales</taxon>
        <taxon>Rickettsiaceae</taxon>
        <taxon>Rickettsieae</taxon>
        <taxon>Rickettsia</taxon>
        <taxon>typhus group</taxon>
    </lineage>
</organism>
<proteinExistence type="inferred from homology"/>